<protein>
    <recommendedName>
        <fullName>Heme sensor protein HssS</fullName>
        <ecNumber>2.7.13.3</ecNumber>
    </recommendedName>
</protein>
<reference key="1">
    <citation type="journal article" date="2005" name="J. Bacteriol.">
        <title>Insights on evolution of virulence and resistance from the complete genome analysis of an early methicillin-resistant Staphylococcus aureus strain and a biofilm-producing methicillin-resistant Staphylococcus epidermidis strain.</title>
        <authorList>
            <person name="Gill S.R."/>
            <person name="Fouts D.E."/>
            <person name="Archer G.L."/>
            <person name="Mongodin E.F."/>
            <person name="DeBoy R.T."/>
            <person name="Ravel J."/>
            <person name="Paulsen I.T."/>
            <person name="Kolonay J.F."/>
            <person name="Brinkac L.M."/>
            <person name="Beanan M.J."/>
            <person name="Dodson R.J."/>
            <person name="Daugherty S.C."/>
            <person name="Madupu R."/>
            <person name="Angiuoli S.V."/>
            <person name="Durkin A.S."/>
            <person name="Haft D.H."/>
            <person name="Vamathevan J.J."/>
            <person name="Khouri H."/>
            <person name="Utterback T.R."/>
            <person name="Lee C."/>
            <person name="Dimitrov G."/>
            <person name="Jiang L."/>
            <person name="Qin H."/>
            <person name="Weidman J."/>
            <person name="Tran K."/>
            <person name="Kang K.H."/>
            <person name="Hance I.R."/>
            <person name="Nelson K.E."/>
            <person name="Fraser C.M."/>
        </authorList>
    </citation>
    <scope>NUCLEOTIDE SEQUENCE [LARGE SCALE GENOMIC DNA]</scope>
    <source>
        <strain>ATCC 35984 / DSM 28319 / BCRC 17069 / CCUG 31568 / BM 3577 / RP62A</strain>
    </source>
</reference>
<evidence type="ECO:0000250" key="1"/>
<evidence type="ECO:0000255" key="2"/>
<evidence type="ECO:0000255" key="3">
    <source>
        <dbReference type="PROSITE-ProRule" id="PRU00102"/>
    </source>
</evidence>
<evidence type="ECO:0000255" key="4">
    <source>
        <dbReference type="PROSITE-ProRule" id="PRU00107"/>
    </source>
</evidence>
<organism>
    <name type="scientific">Staphylococcus epidermidis (strain ATCC 35984 / DSM 28319 / BCRC 17069 / CCUG 31568 / BM 3577 / RP62A)</name>
    <dbReference type="NCBI Taxonomy" id="176279"/>
    <lineage>
        <taxon>Bacteria</taxon>
        <taxon>Bacillati</taxon>
        <taxon>Bacillota</taxon>
        <taxon>Bacilli</taxon>
        <taxon>Bacillales</taxon>
        <taxon>Staphylococcaceae</taxon>
        <taxon>Staphylococcus</taxon>
    </lineage>
</organism>
<accession>Q5HLN1</accession>
<comment type="function">
    <text evidence="1">Member of the two-component regulatory system HssS/HssR involved in intracellular heme homeostasis and tempering of staphylococcal virulence. HssS functions as a heme sensor histidine kinase which is autophosphorylated at a histidine residue and transfers its phosphate group to an aspartate residue of HssR. HssR/HssS activates the expression of HrtAB, an efflux pump, in response to extracellular heme, hemin, hemoglobin or blood (By similarity).</text>
</comment>
<comment type="catalytic activity">
    <reaction>
        <text>ATP + protein L-histidine = ADP + protein N-phospho-L-histidine.</text>
        <dbReference type="EC" id="2.7.13.3"/>
    </reaction>
</comment>
<comment type="subcellular location">
    <subcellularLocation>
        <location evidence="1">Cell membrane</location>
        <topology evidence="1">Multi-pass membrane protein</topology>
    </subcellularLocation>
</comment>
<comment type="PTM">
    <text evidence="1">Autophosphorylated.</text>
</comment>
<name>HSSS_STAEQ</name>
<proteinExistence type="inferred from homology"/>
<feature type="chain" id="PRO_0000331352" description="Heme sensor protein HssS">
    <location>
        <begin position="1"/>
        <end position="451"/>
    </location>
</feature>
<feature type="transmembrane region" description="Helical" evidence="2">
    <location>
        <begin position="9"/>
        <end position="29"/>
    </location>
</feature>
<feature type="transmembrane region" description="Helical" evidence="2">
    <location>
        <begin position="164"/>
        <end position="184"/>
    </location>
</feature>
<feature type="domain" description="HAMP" evidence="3">
    <location>
        <begin position="186"/>
        <end position="238"/>
    </location>
</feature>
<feature type="domain" description="Histidine kinase" evidence="4">
    <location>
        <begin position="246"/>
        <end position="451"/>
    </location>
</feature>
<feature type="modified residue" description="Phosphohistidine; by autocatalysis" evidence="4">
    <location>
        <position position="249"/>
    </location>
</feature>
<dbReference type="EC" id="2.7.13.3"/>
<dbReference type="EMBL" id="CP000029">
    <property type="protein sequence ID" value="AAW52836.1"/>
    <property type="molecule type" value="Genomic_DNA"/>
</dbReference>
<dbReference type="RefSeq" id="WP_001832894.1">
    <property type="nucleotide sequence ID" value="NC_002976.3"/>
</dbReference>
<dbReference type="SMR" id="Q5HLN1"/>
<dbReference type="STRING" id="176279.SERP1954"/>
<dbReference type="KEGG" id="ser:SERP1954"/>
<dbReference type="eggNOG" id="COG3850">
    <property type="taxonomic scope" value="Bacteria"/>
</dbReference>
<dbReference type="eggNOG" id="COG5002">
    <property type="taxonomic scope" value="Bacteria"/>
</dbReference>
<dbReference type="HOGENOM" id="CLU_000445_89_6_9"/>
<dbReference type="Proteomes" id="UP000000531">
    <property type="component" value="Chromosome"/>
</dbReference>
<dbReference type="GO" id="GO:0005886">
    <property type="term" value="C:plasma membrane"/>
    <property type="evidence" value="ECO:0007669"/>
    <property type="project" value="UniProtKB-SubCell"/>
</dbReference>
<dbReference type="GO" id="GO:0005524">
    <property type="term" value="F:ATP binding"/>
    <property type="evidence" value="ECO:0007669"/>
    <property type="project" value="UniProtKB-KW"/>
</dbReference>
<dbReference type="GO" id="GO:0000155">
    <property type="term" value="F:phosphorelay sensor kinase activity"/>
    <property type="evidence" value="ECO:0007669"/>
    <property type="project" value="InterPro"/>
</dbReference>
<dbReference type="CDD" id="cd06225">
    <property type="entry name" value="HAMP"/>
    <property type="match status" value="1"/>
</dbReference>
<dbReference type="CDD" id="cd00075">
    <property type="entry name" value="HATPase"/>
    <property type="match status" value="1"/>
</dbReference>
<dbReference type="CDD" id="cd00082">
    <property type="entry name" value="HisKA"/>
    <property type="match status" value="1"/>
</dbReference>
<dbReference type="Gene3D" id="1.10.287.130">
    <property type="match status" value="1"/>
</dbReference>
<dbReference type="Gene3D" id="6.10.340.10">
    <property type="match status" value="1"/>
</dbReference>
<dbReference type="Gene3D" id="3.30.565.10">
    <property type="entry name" value="Histidine kinase-like ATPase, C-terminal domain"/>
    <property type="match status" value="1"/>
</dbReference>
<dbReference type="InterPro" id="IPR050398">
    <property type="entry name" value="Bact_Sensor_His_Kinase"/>
</dbReference>
<dbReference type="InterPro" id="IPR003660">
    <property type="entry name" value="HAMP_dom"/>
</dbReference>
<dbReference type="InterPro" id="IPR036890">
    <property type="entry name" value="HATPase_C_sf"/>
</dbReference>
<dbReference type="InterPro" id="IPR005467">
    <property type="entry name" value="His_kinase_dom"/>
</dbReference>
<dbReference type="InterPro" id="IPR003661">
    <property type="entry name" value="HisK_dim/P_dom"/>
</dbReference>
<dbReference type="InterPro" id="IPR036097">
    <property type="entry name" value="HisK_dim/P_sf"/>
</dbReference>
<dbReference type="PANTHER" id="PTHR45528:SF11">
    <property type="entry name" value="HISTIDINE KINASE"/>
    <property type="match status" value="1"/>
</dbReference>
<dbReference type="PANTHER" id="PTHR45528">
    <property type="entry name" value="SENSOR HISTIDINE KINASE CPXA"/>
    <property type="match status" value="1"/>
</dbReference>
<dbReference type="Pfam" id="PF00672">
    <property type="entry name" value="HAMP"/>
    <property type="match status" value="1"/>
</dbReference>
<dbReference type="Pfam" id="PF02518">
    <property type="entry name" value="HATPase_c"/>
    <property type="match status" value="1"/>
</dbReference>
<dbReference type="Pfam" id="PF00512">
    <property type="entry name" value="HisKA"/>
    <property type="match status" value="1"/>
</dbReference>
<dbReference type="SMART" id="SM00304">
    <property type="entry name" value="HAMP"/>
    <property type="match status" value="1"/>
</dbReference>
<dbReference type="SMART" id="SM00387">
    <property type="entry name" value="HATPase_c"/>
    <property type="match status" value="1"/>
</dbReference>
<dbReference type="SMART" id="SM00388">
    <property type="entry name" value="HisKA"/>
    <property type="match status" value="1"/>
</dbReference>
<dbReference type="SUPFAM" id="SSF55874">
    <property type="entry name" value="ATPase domain of HSP90 chaperone/DNA topoisomerase II/histidine kinase"/>
    <property type="match status" value="1"/>
</dbReference>
<dbReference type="SUPFAM" id="SSF158472">
    <property type="entry name" value="HAMP domain-like"/>
    <property type="match status" value="1"/>
</dbReference>
<dbReference type="SUPFAM" id="SSF47384">
    <property type="entry name" value="Homodimeric domain of signal transducing histidine kinase"/>
    <property type="match status" value="1"/>
</dbReference>
<dbReference type="PROSITE" id="PS50885">
    <property type="entry name" value="HAMP"/>
    <property type="match status" value="1"/>
</dbReference>
<dbReference type="PROSITE" id="PS50109">
    <property type="entry name" value="HIS_KIN"/>
    <property type="match status" value="1"/>
</dbReference>
<sequence>MFKTLYSRIAIYAITVILFSALMSFLFTNIYYHFHLKASNDAKIMRTLKEAREYERTQKPKPLDTYLKHLGQMNYQIMTVNEHGTKHFYGETFRKNTISQSAIKKVLNGEDYHGIKNKPYAFFVTGFFDNETDNTVGIQFKTDDGALAVFMRPDIGETFSEFRIFLAVLITLLLIISISLVIASTYSIIKPVTALKNATTRIMKGDFSTPIKQTRHDEIGTLQSRFNTMRQNLGQVDQMRQHFVQNVSHEVKTPLTHLQRLLTQLELTQNEEEKQLCINEMFEITNQVSELTKELLLLSELDNASHLTFNDNVHLNTLIKDIIRHEQFRTDEKDLVMFTELEDLYFRGNERLLHQAFNNLIINAMNYAPQNSMINITLTSTNHLIIFNIENDGSIAEEDAKHIFDRFYKLSDESSSNGLGLAITQSIIHLHHGSITLTSDDKTQFIVKLFI</sequence>
<gene>
    <name type="primary">hssS</name>
    <name type="ordered locus">SERP1954</name>
</gene>
<keyword id="KW-0067">ATP-binding</keyword>
<keyword id="KW-1003">Cell membrane</keyword>
<keyword id="KW-0418">Kinase</keyword>
<keyword id="KW-0472">Membrane</keyword>
<keyword id="KW-0547">Nucleotide-binding</keyword>
<keyword id="KW-0597">Phosphoprotein</keyword>
<keyword id="KW-1185">Reference proteome</keyword>
<keyword id="KW-0808">Transferase</keyword>
<keyword id="KW-0812">Transmembrane</keyword>
<keyword id="KW-1133">Transmembrane helix</keyword>
<keyword id="KW-0902">Two-component regulatory system</keyword>
<keyword id="KW-0843">Virulence</keyword>